<proteinExistence type="inferred from homology"/>
<feature type="chain" id="PRO_0000328463" description="Splicing factor 3B subunit 5">
    <location>
        <begin position="1"/>
        <end position="94"/>
    </location>
</feature>
<feature type="region of interest" description="Disordered" evidence="2">
    <location>
        <begin position="75"/>
        <end position="94"/>
    </location>
</feature>
<feature type="compositionally biased region" description="Basic and acidic residues" evidence="2">
    <location>
        <begin position="81"/>
        <end position="94"/>
    </location>
</feature>
<comment type="function">
    <text evidence="1">Involved in pre-mRNA splicing as a component of the splicing factor SF3B complex, a constituent of the spliceosome. SF3B complex is required for 'A' complex assembly formed by the stable binding of U2 snRNP to the branchpoint sequence (BPS) in pre-mRNA. Sequence independent binding of SF3A/SF3B complex upstream of the branch site is essential, it may anchor U2 snRNP to the pre-mRNA.</text>
</comment>
<comment type="subunit">
    <text evidence="1">Component of the spliceosome B complex. Component of splicing factor SF3B complex which is composed of at least eight subunits. SF3B associates with the splicing factor SF3A and a 12S RNA unit to form the U2 small nuclear ribonucleoproteins complex (U2 snRNP).</text>
</comment>
<comment type="subcellular location">
    <subcellularLocation>
        <location evidence="1">Nucleus</location>
    </subcellularLocation>
</comment>
<comment type="similarity">
    <text evidence="3">Belongs to the SF3B5 family.</text>
</comment>
<dbReference type="EMBL" id="AAFI02000006">
    <property type="protein sequence ID" value="EAL71786.1"/>
    <property type="molecule type" value="Genomic_DNA"/>
</dbReference>
<dbReference type="RefSeq" id="XP_645657.1">
    <property type="nucleotide sequence ID" value="XM_640565.1"/>
</dbReference>
<dbReference type="SMR" id="Q55BF5"/>
<dbReference type="FunCoup" id="Q55BF5">
    <property type="interactions" value="482"/>
</dbReference>
<dbReference type="STRING" id="44689.Q55BF5"/>
<dbReference type="PaxDb" id="44689-DDB0233174"/>
<dbReference type="EnsemblProtists" id="EAL71786">
    <property type="protein sequence ID" value="EAL71786"/>
    <property type="gene ID" value="DDB_G0271312"/>
</dbReference>
<dbReference type="GeneID" id="8617849"/>
<dbReference type="KEGG" id="ddi:DDB_G0271312"/>
<dbReference type="dictyBase" id="DDB_G0271312">
    <property type="gene designation" value="sf3b5"/>
</dbReference>
<dbReference type="VEuPathDB" id="AmoebaDB:DDB_G0271312"/>
<dbReference type="eggNOG" id="KOG3485">
    <property type="taxonomic scope" value="Eukaryota"/>
</dbReference>
<dbReference type="HOGENOM" id="CLU_138804_4_0_1"/>
<dbReference type="InParanoid" id="Q55BF5"/>
<dbReference type="OMA" id="YDRFNIH"/>
<dbReference type="PhylomeDB" id="Q55BF5"/>
<dbReference type="PRO" id="PR:Q55BF5"/>
<dbReference type="Proteomes" id="UP000002195">
    <property type="component" value="Chromosome 2"/>
</dbReference>
<dbReference type="GO" id="GO:0005634">
    <property type="term" value="C:nucleus"/>
    <property type="evidence" value="ECO:0000250"/>
    <property type="project" value="UniProtKB"/>
</dbReference>
<dbReference type="GO" id="GO:0071011">
    <property type="term" value="C:precatalytic spliceosome"/>
    <property type="evidence" value="ECO:0000318"/>
    <property type="project" value="GO_Central"/>
</dbReference>
<dbReference type="GO" id="GO:0005686">
    <property type="term" value="C:U2 snRNP"/>
    <property type="evidence" value="ECO:0000250"/>
    <property type="project" value="dictyBase"/>
</dbReference>
<dbReference type="GO" id="GO:0071005">
    <property type="term" value="C:U2-type precatalytic spliceosome"/>
    <property type="evidence" value="ECO:0000250"/>
    <property type="project" value="UniProtKB"/>
</dbReference>
<dbReference type="GO" id="GO:0000398">
    <property type="term" value="P:mRNA splicing, via spliceosome"/>
    <property type="evidence" value="ECO:0000250"/>
    <property type="project" value="UniProtKB"/>
</dbReference>
<dbReference type="InterPro" id="IPR009846">
    <property type="entry name" value="SF3b5/RDS3-10"/>
</dbReference>
<dbReference type="InterPro" id="IPR017089">
    <property type="entry name" value="Splicing_factor_3B_subunit_5"/>
</dbReference>
<dbReference type="PANTHER" id="PTHR20978">
    <property type="entry name" value="SPLICING FACTOR 3B SUBUNIT 5"/>
    <property type="match status" value="1"/>
</dbReference>
<dbReference type="PANTHER" id="PTHR20978:SF0">
    <property type="entry name" value="SPLICING FACTOR 3B SUBUNIT 5"/>
    <property type="match status" value="1"/>
</dbReference>
<dbReference type="Pfam" id="PF07189">
    <property type="entry name" value="SF3b10"/>
    <property type="match status" value="1"/>
</dbReference>
<dbReference type="PIRSF" id="PIRSF037010">
    <property type="entry name" value="Splicing_factor_3B_subunit_5"/>
    <property type="match status" value="1"/>
</dbReference>
<protein>
    <recommendedName>
        <fullName>Splicing factor 3B subunit 5</fullName>
        <shortName>SF3b5</shortName>
    </recommendedName>
    <alternativeName>
        <fullName>Pre-mRNA-splicing factor SF3b 10 kDa subunit homolog</fullName>
    </alternativeName>
</protein>
<accession>Q55BF5</accession>
<keyword id="KW-0507">mRNA processing</keyword>
<keyword id="KW-0508">mRNA splicing</keyword>
<keyword id="KW-0539">Nucleus</keyword>
<keyword id="KW-1185">Reference proteome</keyword>
<keyword id="KW-0747">Spliceosome</keyword>
<name>SF3B5_DICDI</name>
<organism>
    <name type="scientific">Dictyostelium discoideum</name>
    <name type="common">Social amoeba</name>
    <dbReference type="NCBI Taxonomy" id="44689"/>
    <lineage>
        <taxon>Eukaryota</taxon>
        <taxon>Amoebozoa</taxon>
        <taxon>Evosea</taxon>
        <taxon>Eumycetozoa</taxon>
        <taxon>Dictyostelia</taxon>
        <taxon>Dictyosteliales</taxon>
        <taxon>Dictyosteliaceae</taxon>
        <taxon>Dictyostelium</taxon>
    </lineage>
</organism>
<evidence type="ECO:0000250" key="1">
    <source>
        <dbReference type="UniProtKB" id="Q9BWJ5"/>
    </source>
</evidence>
<evidence type="ECO:0000256" key="2">
    <source>
        <dbReference type="SAM" id="MobiDB-lite"/>
    </source>
</evidence>
<evidence type="ECO:0000305" key="3"/>
<gene>
    <name type="primary">sf3b5</name>
    <name type="ORF">DDB_G0271312</name>
</gene>
<reference key="1">
    <citation type="journal article" date="2002" name="Nature">
        <title>Sequence and analysis of chromosome 2 of Dictyostelium discoideum.</title>
        <authorList>
            <person name="Gloeckner G."/>
            <person name="Eichinger L."/>
            <person name="Szafranski K."/>
            <person name="Pachebat J.A."/>
            <person name="Bankier A.T."/>
            <person name="Dear P.H."/>
            <person name="Lehmann R."/>
            <person name="Baumgart C."/>
            <person name="Parra G."/>
            <person name="Abril J.F."/>
            <person name="Guigo R."/>
            <person name="Kumpf K."/>
            <person name="Tunggal B."/>
            <person name="Cox E.C."/>
            <person name="Quail M.A."/>
            <person name="Platzer M."/>
            <person name="Rosenthal A."/>
            <person name="Noegel A.A."/>
        </authorList>
    </citation>
    <scope>NUCLEOTIDE SEQUENCE [LARGE SCALE GENOMIC DNA]</scope>
    <source>
        <strain>AX4</strain>
    </source>
</reference>
<reference key="2">
    <citation type="journal article" date="2005" name="Nature">
        <title>The genome of the social amoeba Dictyostelium discoideum.</title>
        <authorList>
            <person name="Eichinger L."/>
            <person name="Pachebat J.A."/>
            <person name="Gloeckner G."/>
            <person name="Rajandream M.A."/>
            <person name="Sucgang R."/>
            <person name="Berriman M."/>
            <person name="Song J."/>
            <person name="Olsen R."/>
            <person name="Szafranski K."/>
            <person name="Xu Q."/>
            <person name="Tunggal B."/>
            <person name="Kummerfeld S."/>
            <person name="Madera M."/>
            <person name="Konfortov B.A."/>
            <person name="Rivero F."/>
            <person name="Bankier A.T."/>
            <person name="Lehmann R."/>
            <person name="Hamlin N."/>
            <person name="Davies R."/>
            <person name="Gaudet P."/>
            <person name="Fey P."/>
            <person name="Pilcher K."/>
            <person name="Chen G."/>
            <person name="Saunders D."/>
            <person name="Sodergren E.J."/>
            <person name="Davis P."/>
            <person name="Kerhornou A."/>
            <person name="Nie X."/>
            <person name="Hall N."/>
            <person name="Anjard C."/>
            <person name="Hemphill L."/>
            <person name="Bason N."/>
            <person name="Farbrother P."/>
            <person name="Desany B."/>
            <person name="Just E."/>
            <person name="Morio T."/>
            <person name="Rost R."/>
            <person name="Churcher C.M."/>
            <person name="Cooper J."/>
            <person name="Haydock S."/>
            <person name="van Driessche N."/>
            <person name="Cronin A."/>
            <person name="Goodhead I."/>
            <person name="Muzny D.M."/>
            <person name="Mourier T."/>
            <person name="Pain A."/>
            <person name="Lu M."/>
            <person name="Harper D."/>
            <person name="Lindsay R."/>
            <person name="Hauser H."/>
            <person name="James K.D."/>
            <person name="Quiles M."/>
            <person name="Madan Babu M."/>
            <person name="Saito T."/>
            <person name="Buchrieser C."/>
            <person name="Wardroper A."/>
            <person name="Felder M."/>
            <person name="Thangavelu M."/>
            <person name="Johnson D."/>
            <person name="Knights A."/>
            <person name="Loulseged H."/>
            <person name="Mungall K.L."/>
            <person name="Oliver K."/>
            <person name="Price C."/>
            <person name="Quail M.A."/>
            <person name="Urushihara H."/>
            <person name="Hernandez J."/>
            <person name="Rabbinowitsch E."/>
            <person name="Steffen D."/>
            <person name="Sanders M."/>
            <person name="Ma J."/>
            <person name="Kohara Y."/>
            <person name="Sharp S."/>
            <person name="Simmonds M.N."/>
            <person name="Spiegler S."/>
            <person name="Tivey A."/>
            <person name="Sugano S."/>
            <person name="White B."/>
            <person name="Walker D."/>
            <person name="Woodward J.R."/>
            <person name="Winckler T."/>
            <person name="Tanaka Y."/>
            <person name="Shaulsky G."/>
            <person name="Schleicher M."/>
            <person name="Weinstock G.M."/>
            <person name="Rosenthal A."/>
            <person name="Cox E.C."/>
            <person name="Chisholm R.L."/>
            <person name="Gibbs R.A."/>
            <person name="Loomis W.F."/>
            <person name="Platzer M."/>
            <person name="Kay R.R."/>
            <person name="Williams J.G."/>
            <person name="Dear P.H."/>
            <person name="Noegel A.A."/>
            <person name="Barrell B.G."/>
            <person name="Kuspa A."/>
        </authorList>
    </citation>
    <scope>NUCLEOTIDE SEQUENCE [LARGE SCALE GENOMIC DNA]</scope>
    <source>
        <strain>AX4</strain>
    </source>
</reference>
<sequence>MSERESLNSQLEHLQMRYVGTGHADISKHEWLTNQHRDSLSSFIGHSSFLSLFSIAENESVGRVRYNTLTKMISPCGPAPKIKDNTMDKEEKND</sequence>